<dbReference type="EMBL" id="X53253">
    <property type="protein sequence ID" value="CAA37344.1"/>
    <property type="molecule type" value="Genomic_DNA"/>
</dbReference>
<dbReference type="EMBL" id="M60395">
    <property type="protein sequence ID" value="AAA63636.1"/>
    <property type="molecule type" value="Genomic_DNA"/>
</dbReference>
<dbReference type="PIR" id="S12527">
    <property type="entry name" value="S12527"/>
</dbReference>
<dbReference type="SMR" id="P23598"/>
<dbReference type="TCDB" id="1.B.17.1.2">
    <property type="family name" value="the outer membrane factor (omf) family"/>
</dbReference>
<dbReference type="GO" id="GO:0009279">
    <property type="term" value="C:cell outer membrane"/>
    <property type="evidence" value="ECO:0007669"/>
    <property type="project" value="UniProtKB-SubCell"/>
</dbReference>
<dbReference type="GO" id="GO:1990281">
    <property type="term" value="C:efflux pump complex"/>
    <property type="evidence" value="ECO:0007669"/>
    <property type="project" value="TreeGrafter"/>
</dbReference>
<dbReference type="GO" id="GO:0015562">
    <property type="term" value="F:efflux transmembrane transporter activity"/>
    <property type="evidence" value="ECO:0007669"/>
    <property type="project" value="InterPro"/>
</dbReference>
<dbReference type="GO" id="GO:0015288">
    <property type="term" value="F:porin activity"/>
    <property type="evidence" value="ECO:0007669"/>
    <property type="project" value="TreeGrafter"/>
</dbReference>
<dbReference type="Gene3D" id="1.20.1600.10">
    <property type="entry name" value="Outer membrane efflux proteins (OEP)"/>
    <property type="match status" value="1"/>
</dbReference>
<dbReference type="InterPro" id="IPR051906">
    <property type="entry name" value="Bacterial_OMF"/>
</dbReference>
<dbReference type="InterPro" id="IPR003423">
    <property type="entry name" value="OMP_efflux"/>
</dbReference>
<dbReference type="InterPro" id="IPR010130">
    <property type="entry name" value="T1SS_OMP_TolC"/>
</dbReference>
<dbReference type="NCBIfam" id="TIGR01844">
    <property type="entry name" value="type_I_sec_TolC"/>
    <property type="match status" value="1"/>
</dbReference>
<dbReference type="PANTHER" id="PTHR30026">
    <property type="entry name" value="OUTER MEMBRANE PROTEIN TOLC"/>
    <property type="match status" value="1"/>
</dbReference>
<dbReference type="PANTHER" id="PTHR30026:SF20">
    <property type="entry name" value="OUTER MEMBRANE PROTEIN TOLC"/>
    <property type="match status" value="1"/>
</dbReference>
<dbReference type="Pfam" id="PF02321">
    <property type="entry name" value="OEP"/>
    <property type="match status" value="2"/>
</dbReference>
<dbReference type="SUPFAM" id="SSF56954">
    <property type="entry name" value="Outer membrane efflux proteins (OEP)"/>
    <property type="match status" value="1"/>
</dbReference>
<proteinExistence type="inferred from homology"/>
<keyword id="KW-0998">Cell outer membrane</keyword>
<keyword id="KW-0472">Membrane</keyword>
<keyword id="KW-0732">Signal</keyword>
<keyword id="KW-0812">Transmembrane</keyword>
<keyword id="KW-1134">Transmembrane beta strand</keyword>
<keyword id="KW-0813">Transport</keyword>
<evidence type="ECO:0000305" key="1"/>
<reference key="1">
    <citation type="journal article" date="1990" name="EMBO J.">
        <title>Protease secretion by Erwinia chrysanthemi: the specific secretion functions are analogous to those of Escherichia coli alpha-haemolysin.</title>
        <authorList>
            <person name="Letoffe S."/>
            <person name="Delepelaire P."/>
            <person name="Wandersman C."/>
        </authorList>
    </citation>
    <scope>NUCLEOTIDE SEQUENCE [GENOMIC DNA]</scope>
</reference>
<feature type="signal peptide">
    <location>
        <begin position="1"/>
        <end position="23"/>
    </location>
</feature>
<feature type="chain" id="PRO_0000013351" description="Proteases secretion protein PrtF">
    <location>
        <begin position="24"/>
        <end position="462"/>
    </location>
</feature>
<comment type="function">
    <text>Involved in the secretion of proteases A, B, C and G.</text>
</comment>
<comment type="subcellular location">
    <subcellularLocation>
        <location>Cell outer membrane</location>
    </subcellularLocation>
</comment>
<comment type="similarity">
    <text evidence="1">Belongs to the outer membrane factor (OMF) (TC 1.B.17) family.</text>
</comment>
<accession>P23598</accession>
<gene>
    <name type="primary">prtF</name>
</gene>
<name>PRTF_DICCH</name>
<organism>
    <name type="scientific">Dickeya chrysanthemi</name>
    <name type="common">Pectobacterium chrysanthemi</name>
    <name type="synonym">Erwinia chrysanthemi</name>
    <dbReference type="NCBI Taxonomy" id="556"/>
    <lineage>
        <taxon>Bacteria</taxon>
        <taxon>Pseudomonadati</taxon>
        <taxon>Pseudomonadota</taxon>
        <taxon>Gammaproteobacteria</taxon>
        <taxon>Enterobacterales</taxon>
        <taxon>Pectobacteriaceae</taxon>
        <taxon>Dickeya</taxon>
    </lineage>
</organism>
<protein>
    <recommendedName>
        <fullName>Proteases secretion protein PrtF</fullName>
    </recommendedName>
</protein>
<sequence length="462" mass="52456">MRRKAVLLTVVLSLSGGSAQAMGLLDAWELALRNDAQLRAAGFERDAGQEEVAIGRAGLLPSLQYTYGANYSHSKVTQRDRTLNNTTKRDYDNYVSTLTLRQPLLDYAAWARYQQGVTRKLMADQRFRDRSQDLMVRLYQSWSEALLAQEKLMLLDAQRRAYQEQLALNRRLLAAGEGTQTDLRETEARYTVTEAQRIEQEDTLDAAMTDLENMMGSPLQIQDLSPLALDTLPDNVTENRSLSQWRELTVRHNAKLAVQRENVDYSRYEIERNRAGHLPTLDLVASTRNSLSESEYNYNQKYDTQTVGLQVRVPLYSGGAVSASMRQAAAEYQQSQAELDNQTRQTFAELRRQFNLCANGAAKIRAWQMSVAAAEEAIRATRQSVAGGERINLDVLMAEQEWYNARRELTEVKYRWLQAWLNLRYTAGTLNEQDMMQLAAWFQSAPVINKTGINAATGNKTN</sequence>